<feature type="initiator methionine" description="Removed" evidence="7">
    <location>
        <position position="1"/>
    </location>
</feature>
<feature type="chain" id="PRO_0000146825" description="Pyruvate carboxylase 2">
    <location>
        <begin position="2"/>
        <end position="1180"/>
    </location>
</feature>
<feature type="domain" description="Biotin carboxylation">
    <location>
        <begin position="19"/>
        <end position="471"/>
    </location>
</feature>
<feature type="domain" description="ATP-grasp" evidence="2">
    <location>
        <begin position="141"/>
        <end position="338"/>
    </location>
</feature>
<feature type="domain" description="Pyruvate carboxyltransferase" evidence="4">
    <location>
        <begin position="558"/>
        <end position="825"/>
    </location>
</feature>
<feature type="domain" description="Biotinyl-binding" evidence="3">
    <location>
        <begin position="1095"/>
        <end position="1170"/>
    </location>
</feature>
<feature type="active site" evidence="1">
    <location>
        <position position="313"/>
    </location>
</feature>
<feature type="binding site" evidence="1">
    <location>
        <position position="137"/>
    </location>
    <ligand>
        <name>ATP</name>
        <dbReference type="ChEBI" id="CHEBI:30616"/>
    </ligand>
</feature>
<feature type="binding site" evidence="1">
    <location>
        <position position="221"/>
    </location>
    <ligand>
        <name>ATP</name>
        <dbReference type="ChEBI" id="CHEBI:30616"/>
    </ligand>
</feature>
<feature type="binding site" evidence="1">
    <location>
        <position position="256"/>
    </location>
    <ligand>
        <name>ATP</name>
        <dbReference type="ChEBI" id="CHEBI:30616"/>
    </ligand>
</feature>
<feature type="binding site" evidence="1">
    <location>
        <begin position="566"/>
        <end position="570"/>
    </location>
    <ligand>
        <name>substrate</name>
    </ligand>
</feature>
<feature type="binding site" evidence="1">
    <location>
        <position position="567"/>
    </location>
    <ligand>
        <name>a divalent metal cation</name>
        <dbReference type="ChEBI" id="CHEBI:60240"/>
    </ligand>
</feature>
<feature type="binding site" evidence="1">
    <location>
        <position position="639"/>
    </location>
    <ligand>
        <name>substrate</name>
    </ligand>
</feature>
<feature type="binding site" description="via carbamate group" evidence="1">
    <location>
        <position position="735"/>
    </location>
    <ligand>
        <name>a divalent metal cation</name>
        <dbReference type="ChEBI" id="CHEBI:60240"/>
    </ligand>
</feature>
<feature type="binding site" evidence="1">
    <location>
        <position position="765"/>
    </location>
    <ligand>
        <name>a divalent metal cation</name>
        <dbReference type="ChEBI" id="CHEBI:60240"/>
    </ligand>
</feature>
<feature type="binding site" evidence="1">
    <location>
        <position position="767"/>
    </location>
    <ligand>
        <name>a divalent metal cation</name>
        <dbReference type="ChEBI" id="CHEBI:60240"/>
    </ligand>
</feature>
<feature type="binding site" evidence="1">
    <location>
        <position position="899"/>
    </location>
    <ligand>
        <name>substrate</name>
    </ligand>
</feature>
<feature type="modified residue" description="N-acetylserine" evidence="7">
    <location>
        <position position="2"/>
    </location>
</feature>
<feature type="modified residue" description="N6-carboxylysine" evidence="1">
    <location>
        <position position="735"/>
    </location>
</feature>
<feature type="modified residue" description="N6-biotinyllysine" evidence="1 3">
    <location>
        <position position="1136"/>
    </location>
</feature>
<feature type="sequence conflict" description="In Ref. 1; CAA42544." evidence="6" ref="1">
    <original>S</original>
    <variation>C</variation>
    <location>
        <position position="15"/>
    </location>
</feature>
<feature type="sequence conflict" description="In Ref. 1; CAA42544." evidence="6" ref="1">
    <original>D</original>
    <variation>E</variation>
    <location>
        <position position="132"/>
    </location>
</feature>
<feature type="sequence conflict" description="In Ref. 1; CAA42544." evidence="6" ref="1">
    <original>N</original>
    <variation>K</variation>
    <location>
        <position position="238"/>
    </location>
</feature>
<feature type="sequence conflict" description="In Ref. 1; CAA42544." evidence="6" ref="1">
    <original>L</original>
    <variation>F</variation>
    <location>
        <position position="268"/>
    </location>
</feature>
<feature type="sequence conflict" description="In Ref. 1; CAA42544." evidence="6" ref="1">
    <original>S</original>
    <variation>C</variation>
    <location>
        <position position="546"/>
    </location>
</feature>
<feature type="sequence conflict" description="In Ref. 1; CAA42544." evidence="6" ref="1">
    <original>N</original>
    <variation>T</variation>
    <location>
        <position position="642"/>
    </location>
</feature>
<feature type="sequence conflict" description="In Ref. 1; CAA42544." evidence="6" ref="1">
    <original>GTA</original>
    <variation>STR</variation>
    <location>
        <begin position="771"/>
        <end position="773"/>
    </location>
</feature>
<feature type="sequence conflict" description="In Ref. 1; CAA42544." evidence="6" ref="1">
    <original>W</original>
    <variation>R</variation>
    <location>
        <position position="831"/>
    </location>
</feature>
<feature type="sequence conflict" description="In Ref. 1; CAA42544." evidence="6" ref="1">
    <original>S</original>
    <variation>P</variation>
    <location>
        <position position="839"/>
    </location>
</feature>
<feature type="sequence conflict" description="In Ref. 1; CAA42544." evidence="6" ref="1">
    <original>Y</original>
    <variation>N</variation>
    <location>
        <position position="1001"/>
    </location>
</feature>
<feature type="sequence conflict" description="In Ref. 1; CAA42544." evidence="6" ref="1">
    <original>K</original>
    <variation>R</variation>
    <location>
        <position position="1155"/>
    </location>
</feature>
<feature type="sequence conflict" description="In Ref. 1; CAA42544." evidence="6" ref="1">
    <original>Q</original>
    <variation>P</variation>
    <location>
        <position position="1178"/>
    </location>
</feature>
<feature type="sequence conflict" description="In Ref. 1; CAA42544." evidence="6" ref="1">
    <original>K</original>
    <variation>KVIFTR</variation>
    <location>
        <position position="1180"/>
    </location>
</feature>
<sequence>MSSSKKLAGLRDNFSLLGEKNKILVANRGEIPIRIFRSAHELSMRTIAIYSHEDRLSMHRLKADEAYVIGEEGQYTPVGAYLAMDEIIEIAKKHKVDFIHPGYGFLSENSEFADKVVKAGITWIGPPAEVIDSVGDKVSARHLAARANVPTVPGTPGPIETVQEALDFVNEYGYPVIIKAAFGGGGRGMRVVREGDDVADAFQRATSEARTAFGNGTCFVERFLDKPKHIEVQLLADNHGNVVHLFERDCSVQRRHQKVVEVAPAKTLPREVRDAILTDAVKLAKVCGYRNAGTAEFLVDNQNRHYFIEINPRIQVEHTITEEITGIDIVSAQIQIAAGATLTQLGLLQDKITTRGFSIQCRITTEDPSKNFQPDTGRLEVYRSAGGNGVRLDGGNAYAGATISPHYDSMLVKCSCSGSTYEIVRRKMIRALIEFRIRGVKTNIPFLLTLLTNPVFIEGTYWTTFIDDTPQLFQMVSSQNRAQKLLHYLADLAVNGSSIKGQIGLPKLKSNPSVPHLHDAQGNVINVTKSAPPSGWRQVLLEKGPSEFAKQVRQFNGTLLMDTTWRDAHQSLLATRVRTHDLATIAPTTAHALAGAFALECWGGATFDVAMRFLHEDPWERLRKLRSLVPNIPFQMLLRGANGVAYSSLPDNAIDHFVKQAKDNGVDIFRVFDALNDLEQLKVGVNAVKKAGGVVEATVCYSGDMLQPGKKYNLDYYLEVVEKIVQMGTHILGIKDMAGTMKPAAAKLLIGSLRTRYPDLPIHVHSHDSAGTAVASMTACALAGADVVDVAINSMSGLTSQPSINALLASLEGNIDTGINVEHVRELDAYWAEMRLLYSCFEADLKGPDPEVYQHEIPGGQLTNLLFQAQQLGLGEQWAETKRAYREANYLLGDIVKVTPTSKVVGDLAQFMVSNKLTSDDIRRLANSLDFPDSVMDFFEGLIGQPYGGFPEPLRSDVLRNKRRKLTCRPGLELEPFDLEKIREDLQNRFGDIDECDVASYNMYPRVYEDFQKIRETYGDLSVLPTKNFLAPAEPDEEIEVTIEQGKTLIIKLQAVGDLNKKTGQREVYFELNGELRKIRVADKSQNIQSVAKPKADVHDTHQIGAPMAGVIIEVKVHKGSLVKKGESIAVLSAMKMEMVVSSPADGQVKDVFIKDGESVDASDLLVVLEEETLPPSQKK</sequence>
<proteinExistence type="evidence at protein level"/>
<evidence type="ECO:0000250" key="1"/>
<evidence type="ECO:0000255" key="2">
    <source>
        <dbReference type="PROSITE-ProRule" id="PRU00409"/>
    </source>
</evidence>
<evidence type="ECO:0000255" key="3">
    <source>
        <dbReference type="PROSITE-ProRule" id="PRU01066"/>
    </source>
</evidence>
<evidence type="ECO:0000255" key="4">
    <source>
        <dbReference type="PROSITE-ProRule" id="PRU01151"/>
    </source>
</evidence>
<evidence type="ECO:0000269" key="5">
    <source>
    </source>
</evidence>
<evidence type="ECO:0000305" key="6"/>
<evidence type="ECO:0007744" key="7">
    <source>
    </source>
</evidence>
<accession>P32327</accession>
<accession>D6VQL4</accession>
<name>PYC2_YEAST</name>
<keyword id="KW-0007">Acetylation</keyword>
<keyword id="KW-0067">ATP-binding</keyword>
<keyword id="KW-0092">Biotin</keyword>
<keyword id="KW-0963">Cytoplasm</keyword>
<keyword id="KW-0312">Gluconeogenesis</keyword>
<keyword id="KW-0436">Ligase</keyword>
<keyword id="KW-0479">Metal-binding</keyword>
<keyword id="KW-0511">Multifunctional enzyme</keyword>
<keyword id="KW-0547">Nucleotide-binding</keyword>
<keyword id="KW-1185">Reference proteome</keyword>
<keyword id="KW-0862">Zinc</keyword>
<protein>
    <recommendedName>
        <fullName>Pyruvate carboxylase 2</fullName>
        <ecNumber>6.4.1.1</ecNumber>
    </recommendedName>
    <alternativeName>
        <fullName>Pyruvic carboxylase 2</fullName>
        <shortName>PCB 2</shortName>
    </alternativeName>
</protein>
<gene>
    <name type="primary">PYC2</name>
    <name type="ordered locus">YBR218C</name>
    <name type="ORF">YBR1507</name>
</gene>
<comment type="function">
    <text>Pyruvate carboxylase catalyzes a 2-step reaction, involving the ATP-dependent carboxylation of the covalently attached biotin in the first step and the transfer of the carboxyl group to pyruvate in the second.</text>
</comment>
<comment type="catalytic activity">
    <reaction>
        <text>hydrogencarbonate + pyruvate + ATP = oxaloacetate + ADP + phosphate + H(+)</text>
        <dbReference type="Rhea" id="RHEA:20844"/>
        <dbReference type="ChEBI" id="CHEBI:15361"/>
        <dbReference type="ChEBI" id="CHEBI:15378"/>
        <dbReference type="ChEBI" id="CHEBI:16452"/>
        <dbReference type="ChEBI" id="CHEBI:17544"/>
        <dbReference type="ChEBI" id="CHEBI:30616"/>
        <dbReference type="ChEBI" id="CHEBI:43474"/>
        <dbReference type="ChEBI" id="CHEBI:456216"/>
        <dbReference type="EC" id="6.4.1.1"/>
    </reaction>
</comment>
<comment type="cofactor">
    <cofactor>
        <name>biotin</name>
        <dbReference type="ChEBI" id="CHEBI:57586"/>
    </cofactor>
</comment>
<comment type="cofactor">
    <cofactor>
        <name>Zn(2+)</name>
        <dbReference type="ChEBI" id="CHEBI:29105"/>
    </cofactor>
</comment>
<comment type="pathway">
    <text>Carbohydrate biosynthesis; gluconeogenesis.</text>
</comment>
<comment type="subunit">
    <text>Homotetramer.</text>
</comment>
<comment type="interaction">
    <interactant intactId="EBI-14365">
        <id>P32327</id>
    </interactant>
    <interactant intactId="EBI-14358">
        <id>P11154</id>
        <label>PYC1</label>
    </interactant>
    <organismsDiffer>false</organismsDiffer>
    <experiments>3</experiments>
</comment>
<comment type="subcellular location">
    <subcellularLocation>
        <location>Cytoplasm</location>
    </subcellularLocation>
</comment>
<comment type="induction">
    <text>By glucose.</text>
</comment>
<comment type="miscellaneous">
    <text evidence="5">Present with 17000 molecules/cell in log phase SD medium.</text>
</comment>
<dbReference type="EC" id="6.4.1.1"/>
<dbReference type="EMBL" id="X59890">
    <property type="protein sequence ID" value="CAA42544.1"/>
    <property type="molecule type" value="Genomic_DNA"/>
</dbReference>
<dbReference type="EMBL" id="U35647">
    <property type="protein sequence ID" value="AAC49147.1"/>
    <property type="molecule type" value="Genomic_DNA"/>
</dbReference>
<dbReference type="EMBL" id="Z36087">
    <property type="protein sequence ID" value="CAA85182.1"/>
    <property type="molecule type" value="Genomic_DNA"/>
</dbReference>
<dbReference type="EMBL" id="BK006936">
    <property type="protein sequence ID" value="DAA07334.1"/>
    <property type="molecule type" value="Genomic_DNA"/>
</dbReference>
<dbReference type="PIR" id="S46094">
    <property type="entry name" value="S46094"/>
</dbReference>
<dbReference type="RefSeq" id="NP_009777.1">
    <property type="nucleotide sequence ID" value="NM_001178566.1"/>
</dbReference>
<dbReference type="SMR" id="P32327"/>
<dbReference type="BioGRID" id="32915">
    <property type="interactions" value="241"/>
</dbReference>
<dbReference type="DIP" id="DIP-6426N"/>
<dbReference type="FunCoup" id="P32327">
    <property type="interactions" value="719"/>
</dbReference>
<dbReference type="IntAct" id="P32327">
    <property type="interactions" value="17"/>
</dbReference>
<dbReference type="MINT" id="P32327"/>
<dbReference type="STRING" id="4932.YBR218C"/>
<dbReference type="CarbonylDB" id="P32327"/>
<dbReference type="GlyGen" id="P32327">
    <property type="glycosylation" value="1 site"/>
</dbReference>
<dbReference type="iPTMnet" id="P32327"/>
<dbReference type="PaxDb" id="4932-YBR218C"/>
<dbReference type="PeptideAtlas" id="P32327"/>
<dbReference type="EnsemblFungi" id="YBR218C_mRNA">
    <property type="protein sequence ID" value="YBR218C"/>
    <property type="gene ID" value="YBR218C"/>
</dbReference>
<dbReference type="GeneID" id="852519"/>
<dbReference type="KEGG" id="sce:YBR218C"/>
<dbReference type="AGR" id="SGD:S000000422"/>
<dbReference type="SGD" id="S000000422">
    <property type="gene designation" value="PYC2"/>
</dbReference>
<dbReference type="VEuPathDB" id="FungiDB:YBR218C"/>
<dbReference type="eggNOG" id="KOG0369">
    <property type="taxonomic scope" value="Eukaryota"/>
</dbReference>
<dbReference type="GeneTree" id="ENSGT00900000141164"/>
<dbReference type="HOGENOM" id="CLU_000395_0_1_1"/>
<dbReference type="InParanoid" id="P32327"/>
<dbReference type="OMA" id="AEACICY"/>
<dbReference type="OrthoDB" id="196847at2759"/>
<dbReference type="BioCyc" id="YEAST:YBR218C-MONOMER"/>
<dbReference type="BRENDA" id="6.4.1.1">
    <property type="organism ID" value="984"/>
</dbReference>
<dbReference type="UniPathway" id="UPA00138"/>
<dbReference type="BioGRID-ORCS" id="852519">
    <property type="hits" value="5 hits in 10 CRISPR screens"/>
</dbReference>
<dbReference type="PRO" id="PR:P32327"/>
<dbReference type="Proteomes" id="UP000002311">
    <property type="component" value="Chromosome II"/>
</dbReference>
<dbReference type="RNAct" id="P32327">
    <property type="molecule type" value="protein"/>
</dbReference>
<dbReference type="GO" id="GO:0005829">
    <property type="term" value="C:cytosol"/>
    <property type="evidence" value="ECO:0000314"/>
    <property type="project" value="SGD"/>
</dbReference>
<dbReference type="GO" id="GO:0005524">
    <property type="term" value="F:ATP binding"/>
    <property type="evidence" value="ECO:0007669"/>
    <property type="project" value="UniProtKB-KW"/>
</dbReference>
<dbReference type="GO" id="GO:0046872">
    <property type="term" value="F:metal ion binding"/>
    <property type="evidence" value="ECO:0007669"/>
    <property type="project" value="UniProtKB-KW"/>
</dbReference>
<dbReference type="GO" id="GO:0004736">
    <property type="term" value="F:pyruvate carboxylase activity"/>
    <property type="evidence" value="ECO:0000315"/>
    <property type="project" value="SGD"/>
</dbReference>
<dbReference type="GO" id="GO:0006094">
    <property type="term" value="P:gluconeogenesis"/>
    <property type="evidence" value="ECO:0000315"/>
    <property type="project" value="SGD"/>
</dbReference>
<dbReference type="GO" id="GO:0006090">
    <property type="term" value="P:pyruvate metabolic process"/>
    <property type="evidence" value="ECO:0000318"/>
    <property type="project" value="GO_Central"/>
</dbReference>
<dbReference type="CDD" id="cd06850">
    <property type="entry name" value="biotinyl_domain"/>
    <property type="match status" value="1"/>
</dbReference>
<dbReference type="CDD" id="cd07937">
    <property type="entry name" value="DRE_TIM_PC_TC_5S"/>
    <property type="match status" value="1"/>
</dbReference>
<dbReference type="FunFam" id="2.40.50.100:FF:000003">
    <property type="entry name" value="Acetyl-CoA carboxylase biotin carboxyl carrier protein"/>
    <property type="match status" value="1"/>
</dbReference>
<dbReference type="FunFam" id="3.30.1490.20:FF:000018">
    <property type="entry name" value="Biotin carboxylase"/>
    <property type="match status" value="1"/>
</dbReference>
<dbReference type="FunFam" id="3.40.50.20:FF:000010">
    <property type="entry name" value="Propionyl-CoA carboxylase subunit alpha"/>
    <property type="match status" value="1"/>
</dbReference>
<dbReference type="FunFam" id="1.10.10.60:FF:000600">
    <property type="entry name" value="Pyruvate carboxylase"/>
    <property type="match status" value="1"/>
</dbReference>
<dbReference type="FunFam" id="3.10.600.10:FF:000007">
    <property type="entry name" value="Pyruvate carboxylase"/>
    <property type="match status" value="1"/>
</dbReference>
<dbReference type="FunFam" id="3.20.20.70:FF:000033">
    <property type="entry name" value="Pyruvate carboxylase"/>
    <property type="match status" value="1"/>
</dbReference>
<dbReference type="FunFam" id="3.30.470.20:FF:000012">
    <property type="entry name" value="Pyruvate carboxylase"/>
    <property type="match status" value="1"/>
</dbReference>
<dbReference type="Gene3D" id="2.40.50.100">
    <property type="match status" value="1"/>
</dbReference>
<dbReference type="Gene3D" id="3.20.20.70">
    <property type="entry name" value="Aldolase class I"/>
    <property type="match status" value="1"/>
</dbReference>
<dbReference type="Gene3D" id="3.30.470.20">
    <property type="entry name" value="ATP-grasp fold, B domain"/>
    <property type="match status" value="1"/>
</dbReference>
<dbReference type="Gene3D" id="3.10.600.10">
    <property type="entry name" value="pyruvate carboxylase f1077a mutant domain"/>
    <property type="match status" value="1"/>
</dbReference>
<dbReference type="InterPro" id="IPR013785">
    <property type="entry name" value="Aldolase_TIM"/>
</dbReference>
<dbReference type="InterPro" id="IPR011761">
    <property type="entry name" value="ATP-grasp"/>
</dbReference>
<dbReference type="InterPro" id="IPR005481">
    <property type="entry name" value="BC-like_N"/>
</dbReference>
<dbReference type="InterPro" id="IPR001882">
    <property type="entry name" value="Biotin_BS"/>
</dbReference>
<dbReference type="InterPro" id="IPR011764">
    <property type="entry name" value="Biotin_carboxylation_dom"/>
</dbReference>
<dbReference type="InterPro" id="IPR005482">
    <property type="entry name" value="Biotin_COase_C"/>
</dbReference>
<dbReference type="InterPro" id="IPR000089">
    <property type="entry name" value="Biotin_lipoyl"/>
</dbReference>
<dbReference type="InterPro" id="IPR003379">
    <property type="entry name" value="Carboxylase_cons_dom"/>
</dbReference>
<dbReference type="InterPro" id="IPR005479">
    <property type="entry name" value="CbamoylP_synth_lsu-like_ATP-bd"/>
</dbReference>
<dbReference type="InterPro" id="IPR055268">
    <property type="entry name" value="PCB-like"/>
</dbReference>
<dbReference type="InterPro" id="IPR016185">
    <property type="entry name" value="PreATP-grasp_dom_sf"/>
</dbReference>
<dbReference type="InterPro" id="IPR000891">
    <property type="entry name" value="PYR_CT"/>
</dbReference>
<dbReference type="InterPro" id="IPR005930">
    <property type="entry name" value="Pyruv_COase"/>
</dbReference>
<dbReference type="InterPro" id="IPR011054">
    <property type="entry name" value="Rudment_hybrid_motif"/>
</dbReference>
<dbReference type="InterPro" id="IPR011053">
    <property type="entry name" value="Single_hybrid_motif"/>
</dbReference>
<dbReference type="NCBIfam" id="NF006761">
    <property type="entry name" value="PRK09282.1"/>
    <property type="match status" value="1"/>
</dbReference>
<dbReference type="NCBIfam" id="NF009554">
    <property type="entry name" value="PRK12999.1"/>
    <property type="match status" value="1"/>
</dbReference>
<dbReference type="NCBIfam" id="TIGR01235">
    <property type="entry name" value="pyruv_carbox"/>
    <property type="match status" value="1"/>
</dbReference>
<dbReference type="PANTHER" id="PTHR43778">
    <property type="entry name" value="PYRUVATE CARBOXYLASE"/>
    <property type="match status" value="1"/>
</dbReference>
<dbReference type="PANTHER" id="PTHR43778:SF2">
    <property type="entry name" value="PYRUVATE CARBOXYLASE, MITOCHONDRIAL"/>
    <property type="match status" value="1"/>
</dbReference>
<dbReference type="Pfam" id="PF02785">
    <property type="entry name" value="Biotin_carb_C"/>
    <property type="match status" value="1"/>
</dbReference>
<dbReference type="Pfam" id="PF00289">
    <property type="entry name" value="Biotin_carb_N"/>
    <property type="match status" value="1"/>
</dbReference>
<dbReference type="Pfam" id="PF00364">
    <property type="entry name" value="Biotin_lipoyl"/>
    <property type="match status" value="1"/>
</dbReference>
<dbReference type="Pfam" id="PF02786">
    <property type="entry name" value="CPSase_L_D2"/>
    <property type="match status" value="1"/>
</dbReference>
<dbReference type="Pfam" id="PF00682">
    <property type="entry name" value="HMGL-like"/>
    <property type="match status" value="1"/>
</dbReference>
<dbReference type="Pfam" id="PF02436">
    <property type="entry name" value="PYC_OADA"/>
    <property type="match status" value="1"/>
</dbReference>
<dbReference type="PIRSF" id="PIRSF001594">
    <property type="entry name" value="Pyruv_carbox"/>
    <property type="match status" value="1"/>
</dbReference>
<dbReference type="SMART" id="SM00878">
    <property type="entry name" value="Biotin_carb_C"/>
    <property type="match status" value="1"/>
</dbReference>
<dbReference type="SUPFAM" id="SSF51569">
    <property type="entry name" value="Aldolase"/>
    <property type="match status" value="1"/>
</dbReference>
<dbReference type="SUPFAM" id="SSF56059">
    <property type="entry name" value="Glutathione synthetase ATP-binding domain-like"/>
    <property type="match status" value="1"/>
</dbReference>
<dbReference type="SUPFAM" id="SSF89000">
    <property type="entry name" value="post-HMGL domain-like"/>
    <property type="match status" value="1"/>
</dbReference>
<dbReference type="SUPFAM" id="SSF52440">
    <property type="entry name" value="PreATP-grasp domain"/>
    <property type="match status" value="1"/>
</dbReference>
<dbReference type="SUPFAM" id="SSF51246">
    <property type="entry name" value="Rudiment single hybrid motif"/>
    <property type="match status" value="1"/>
</dbReference>
<dbReference type="SUPFAM" id="SSF51230">
    <property type="entry name" value="Single hybrid motif"/>
    <property type="match status" value="1"/>
</dbReference>
<dbReference type="PROSITE" id="PS50975">
    <property type="entry name" value="ATP_GRASP"/>
    <property type="match status" value="1"/>
</dbReference>
<dbReference type="PROSITE" id="PS50979">
    <property type="entry name" value="BC"/>
    <property type="match status" value="1"/>
</dbReference>
<dbReference type="PROSITE" id="PS00188">
    <property type="entry name" value="BIOTIN"/>
    <property type="match status" value="1"/>
</dbReference>
<dbReference type="PROSITE" id="PS50968">
    <property type="entry name" value="BIOTINYL_LIPOYL"/>
    <property type="match status" value="1"/>
</dbReference>
<dbReference type="PROSITE" id="PS00866">
    <property type="entry name" value="CPSASE_1"/>
    <property type="match status" value="1"/>
</dbReference>
<dbReference type="PROSITE" id="PS00867">
    <property type="entry name" value="CPSASE_2"/>
    <property type="match status" value="1"/>
</dbReference>
<dbReference type="PROSITE" id="PS50991">
    <property type="entry name" value="PYR_CT"/>
    <property type="match status" value="1"/>
</dbReference>
<organism>
    <name type="scientific">Saccharomyces cerevisiae (strain ATCC 204508 / S288c)</name>
    <name type="common">Baker's yeast</name>
    <dbReference type="NCBI Taxonomy" id="559292"/>
    <lineage>
        <taxon>Eukaryota</taxon>
        <taxon>Fungi</taxon>
        <taxon>Dikarya</taxon>
        <taxon>Ascomycota</taxon>
        <taxon>Saccharomycotina</taxon>
        <taxon>Saccharomycetes</taxon>
        <taxon>Saccharomycetales</taxon>
        <taxon>Saccharomycetaceae</taxon>
        <taxon>Saccharomyces</taxon>
    </lineage>
</organism>
<reference key="1">
    <citation type="journal article" date="1991" name="Mol. Gen. Genet.">
        <title>DNA sequences in chromosomes II and VII code for pyruvate carboxylase isoenzymes in Saccharomyces cerevisiae: analysis of pyruvate carboxylase-deficient strains.</title>
        <authorList>
            <person name="Stucka R."/>
            <person name="Dequin S."/>
            <person name="Salmon J.-M."/>
            <person name="Gancedo C."/>
        </authorList>
    </citation>
    <scope>NUCLEOTIDE SEQUENCE [GENOMIC DNA]</scope>
    <scope>CHARACTERIZATION</scope>
</reference>
<reference key="2">
    <citation type="journal article" date="1995" name="Biochem. J.">
        <title>Polymorphism of the yeast pyruvate carboxylase 2 gene and protein: effects on protein biotinylation.</title>
        <authorList>
            <person name="Val D.L."/>
            <person name="Chapman-Smith A."/>
            <person name="Walker M.E."/>
            <person name="Cronan J.E. Jr."/>
            <person name="Wallace J.C."/>
        </authorList>
    </citation>
    <scope>NUCLEOTIDE SEQUENCE [GENOMIC DNA]</scope>
</reference>
<reference key="3">
    <citation type="journal article" date="1994" name="EMBO J.">
        <title>Complete DNA sequence of yeast chromosome II.</title>
        <authorList>
            <person name="Feldmann H."/>
            <person name="Aigle M."/>
            <person name="Aljinovic G."/>
            <person name="Andre B."/>
            <person name="Baclet M.C."/>
            <person name="Barthe C."/>
            <person name="Baur A."/>
            <person name="Becam A.-M."/>
            <person name="Biteau N."/>
            <person name="Boles E."/>
            <person name="Brandt T."/>
            <person name="Brendel M."/>
            <person name="Brueckner M."/>
            <person name="Bussereau F."/>
            <person name="Christiansen C."/>
            <person name="Contreras R."/>
            <person name="Crouzet M."/>
            <person name="Cziepluch C."/>
            <person name="Demolis N."/>
            <person name="Delaveau T."/>
            <person name="Doignon F."/>
            <person name="Domdey H."/>
            <person name="Duesterhus S."/>
            <person name="Dubois E."/>
            <person name="Dujon B."/>
            <person name="El Bakkoury M."/>
            <person name="Entian K.-D."/>
            <person name="Feuermann M."/>
            <person name="Fiers W."/>
            <person name="Fobo G.M."/>
            <person name="Fritz C."/>
            <person name="Gassenhuber J."/>
            <person name="Glansdorff N."/>
            <person name="Goffeau A."/>
            <person name="Grivell L.A."/>
            <person name="de Haan M."/>
            <person name="Hein C."/>
            <person name="Herbert C.J."/>
            <person name="Hollenberg C.P."/>
            <person name="Holmstroem K."/>
            <person name="Jacq C."/>
            <person name="Jacquet M."/>
            <person name="Jauniaux J.-C."/>
            <person name="Jonniaux J.-L."/>
            <person name="Kallesoee T."/>
            <person name="Kiesau P."/>
            <person name="Kirchrath L."/>
            <person name="Koetter P."/>
            <person name="Korol S."/>
            <person name="Liebl S."/>
            <person name="Logghe M."/>
            <person name="Lohan A.J.E."/>
            <person name="Louis E.J."/>
            <person name="Li Z.Y."/>
            <person name="Maat M.J."/>
            <person name="Mallet L."/>
            <person name="Mannhaupt G."/>
            <person name="Messenguy F."/>
            <person name="Miosga T."/>
            <person name="Molemans F."/>
            <person name="Mueller S."/>
            <person name="Nasr F."/>
            <person name="Obermaier B."/>
            <person name="Perea J."/>
            <person name="Pierard A."/>
            <person name="Piravandi E."/>
            <person name="Pohl F.M."/>
            <person name="Pohl T.M."/>
            <person name="Potier S."/>
            <person name="Proft M."/>
            <person name="Purnelle B."/>
            <person name="Ramezani Rad M."/>
            <person name="Rieger M."/>
            <person name="Rose M."/>
            <person name="Schaaff-Gerstenschlaeger I."/>
            <person name="Scherens B."/>
            <person name="Schwarzlose C."/>
            <person name="Skala J."/>
            <person name="Slonimski P.P."/>
            <person name="Smits P.H.M."/>
            <person name="Souciet J.-L."/>
            <person name="Steensma H.Y."/>
            <person name="Stucka R."/>
            <person name="Urrestarazu L.A."/>
            <person name="van der Aart Q.J.M."/>
            <person name="Van Dyck L."/>
            <person name="Vassarotti A."/>
            <person name="Vetter I."/>
            <person name="Vierendeels F."/>
            <person name="Vissers S."/>
            <person name="Wagner G."/>
            <person name="de Wergifosse P."/>
            <person name="Wolfe K.H."/>
            <person name="Zagulski M."/>
            <person name="Zimmermann F.K."/>
            <person name="Mewes H.-W."/>
            <person name="Kleine K."/>
        </authorList>
    </citation>
    <scope>NUCLEOTIDE SEQUENCE [LARGE SCALE GENOMIC DNA]</scope>
    <source>
        <strain>ATCC 204508 / S288c</strain>
    </source>
</reference>
<reference key="4">
    <citation type="journal article" date="2014" name="G3 (Bethesda)">
        <title>The reference genome sequence of Saccharomyces cerevisiae: Then and now.</title>
        <authorList>
            <person name="Engel S.R."/>
            <person name="Dietrich F.S."/>
            <person name="Fisk D.G."/>
            <person name="Binkley G."/>
            <person name="Balakrishnan R."/>
            <person name="Costanzo M.C."/>
            <person name="Dwight S.S."/>
            <person name="Hitz B.C."/>
            <person name="Karra K."/>
            <person name="Nash R.S."/>
            <person name="Weng S."/>
            <person name="Wong E.D."/>
            <person name="Lloyd P."/>
            <person name="Skrzypek M.S."/>
            <person name="Miyasato S.R."/>
            <person name="Simison M."/>
            <person name="Cherry J.M."/>
        </authorList>
    </citation>
    <scope>GENOME REANNOTATION</scope>
    <source>
        <strain>ATCC 204508 / S288c</strain>
    </source>
</reference>
<reference key="5">
    <citation type="journal article" date="2003" name="Nature">
        <title>Global analysis of protein expression in yeast.</title>
        <authorList>
            <person name="Ghaemmaghami S."/>
            <person name="Huh W.-K."/>
            <person name="Bower K."/>
            <person name="Howson R.W."/>
            <person name="Belle A."/>
            <person name="Dephoure N."/>
            <person name="O'Shea E.K."/>
            <person name="Weissman J.S."/>
        </authorList>
    </citation>
    <scope>LEVEL OF PROTEIN EXPRESSION [LARGE SCALE ANALYSIS]</scope>
</reference>
<reference key="6">
    <citation type="journal article" date="2012" name="Proc. Natl. Acad. Sci. U.S.A.">
        <title>N-terminal acetylome analyses and functional insights of the N-terminal acetyltransferase NatB.</title>
        <authorList>
            <person name="Van Damme P."/>
            <person name="Lasa M."/>
            <person name="Polevoda B."/>
            <person name="Gazquez C."/>
            <person name="Elosegui-Artola A."/>
            <person name="Kim D.S."/>
            <person name="De Juan-Pardo E."/>
            <person name="Demeyer K."/>
            <person name="Hole K."/>
            <person name="Larrea E."/>
            <person name="Timmerman E."/>
            <person name="Prieto J."/>
            <person name="Arnesen T."/>
            <person name="Sherman F."/>
            <person name="Gevaert K."/>
            <person name="Aldabe R."/>
        </authorList>
    </citation>
    <scope>ACETYLATION [LARGE SCALE ANALYSIS] AT SER-2</scope>
    <scope>CLEAVAGE OF INITIATOR METHIONINE [LARGE SCALE ANALYSIS]</scope>
    <scope>IDENTIFICATION BY MASS SPECTROMETRY [LARGE SCALE ANALYSIS]</scope>
</reference>